<evidence type="ECO:0000255" key="1">
    <source>
        <dbReference type="HAMAP-Rule" id="MF_01343"/>
    </source>
</evidence>
<evidence type="ECO:0000305" key="2"/>
<comment type="function">
    <text evidence="1">One of the primary rRNA binding proteins, it binds directly to 16S rRNA where it helps nucleate assembly of the platform of the 30S subunit by binding and bridging several RNA helices of the 16S rRNA.</text>
</comment>
<comment type="function">
    <text evidence="1">Forms an intersubunit bridge (bridge B4) with the 23S rRNA of the 50S subunit in the ribosome.</text>
</comment>
<comment type="subunit">
    <text evidence="1">Part of the 30S ribosomal subunit. Forms a bridge to the 50S subunit in the 70S ribosome, contacting the 23S rRNA.</text>
</comment>
<comment type="similarity">
    <text evidence="1">Belongs to the universal ribosomal protein uS15 family.</text>
</comment>
<name>RS15_SHISS</name>
<feature type="chain" id="PRO_0000115537" description="Small ribosomal subunit protein uS15">
    <location>
        <begin position="1"/>
        <end position="89"/>
    </location>
</feature>
<protein>
    <recommendedName>
        <fullName evidence="1">Small ribosomal subunit protein uS15</fullName>
    </recommendedName>
    <alternativeName>
        <fullName evidence="2">30S ribosomal protein S15</fullName>
    </alternativeName>
</protein>
<accession>Q3YX76</accession>
<gene>
    <name evidence="1" type="primary">rpsO</name>
    <name type="ordered locus">SSON_3311</name>
</gene>
<organism>
    <name type="scientific">Shigella sonnei (strain Ss046)</name>
    <dbReference type="NCBI Taxonomy" id="300269"/>
    <lineage>
        <taxon>Bacteria</taxon>
        <taxon>Pseudomonadati</taxon>
        <taxon>Pseudomonadota</taxon>
        <taxon>Gammaproteobacteria</taxon>
        <taxon>Enterobacterales</taxon>
        <taxon>Enterobacteriaceae</taxon>
        <taxon>Shigella</taxon>
    </lineage>
</organism>
<proteinExistence type="inferred from homology"/>
<sequence length="89" mass="10269">MSLSTEATAKIVSEFGRDANDTGSTEVQVALLTAQINHLQGHFAEHKKDHHSRRGLLRMVSQRRKLLDYLKRKDVARYTQLIERLGLRR</sequence>
<reference key="1">
    <citation type="journal article" date="2005" name="Nucleic Acids Res.">
        <title>Genome dynamics and diversity of Shigella species, the etiologic agents of bacillary dysentery.</title>
        <authorList>
            <person name="Yang F."/>
            <person name="Yang J."/>
            <person name="Zhang X."/>
            <person name="Chen L."/>
            <person name="Jiang Y."/>
            <person name="Yan Y."/>
            <person name="Tang X."/>
            <person name="Wang J."/>
            <person name="Xiong Z."/>
            <person name="Dong J."/>
            <person name="Xue Y."/>
            <person name="Zhu Y."/>
            <person name="Xu X."/>
            <person name="Sun L."/>
            <person name="Chen S."/>
            <person name="Nie H."/>
            <person name="Peng J."/>
            <person name="Xu J."/>
            <person name="Wang Y."/>
            <person name="Yuan Z."/>
            <person name="Wen Y."/>
            <person name="Yao Z."/>
            <person name="Shen Y."/>
            <person name="Qiang B."/>
            <person name="Hou Y."/>
            <person name="Yu J."/>
            <person name="Jin Q."/>
        </authorList>
    </citation>
    <scope>NUCLEOTIDE SEQUENCE [LARGE SCALE GENOMIC DNA]</scope>
    <source>
        <strain>Ss046</strain>
    </source>
</reference>
<dbReference type="EMBL" id="CP000038">
    <property type="protein sequence ID" value="AAZ89886.1"/>
    <property type="molecule type" value="Genomic_DNA"/>
</dbReference>
<dbReference type="RefSeq" id="WP_000059466.1">
    <property type="nucleotide sequence ID" value="NC_007384.1"/>
</dbReference>
<dbReference type="SMR" id="Q3YX76"/>
<dbReference type="GeneID" id="93778818"/>
<dbReference type="KEGG" id="ssn:SSON_3311"/>
<dbReference type="HOGENOM" id="CLU_148518_0_0_6"/>
<dbReference type="Proteomes" id="UP000002529">
    <property type="component" value="Chromosome"/>
</dbReference>
<dbReference type="GO" id="GO:0022627">
    <property type="term" value="C:cytosolic small ribosomal subunit"/>
    <property type="evidence" value="ECO:0007669"/>
    <property type="project" value="TreeGrafter"/>
</dbReference>
<dbReference type="GO" id="GO:0019843">
    <property type="term" value="F:rRNA binding"/>
    <property type="evidence" value="ECO:0007669"/>
    <property type="project" value="UniProtKB-UniRule"/>
</dbReference>
<dbReference type="GO" id="GO:0003735">
    <property type="term" value="F:structural constituent of ribosome"/>
    <property type="evidence" value="ECO:0007669"/>
    <property type="project" value="InterPro"/>
</dbReference>
<dbReference type="GO" id="GO:0006412">
    <property type="term" value="P:translation"/>
    <property type="evidence" value="ECO:0007669"/>
    <property type="project" value="UniProtKB-UniRule"/>
</dbReference>
<dbReference type="CDD" id="cd00353">
    <property type="entry name" value="Ribosomal_S15p_S13e"/>
    <property type="match status" value="1"/>
</dbReference>
<dbReference type="FunFam" id="1.10.287.10:FF:000002">
    <property type="entry name" value="30S ribosomal protein S15"/>
    <property type="match status" value="1"/>
</dbReference>
<dbReference type="Gene3D" id="6.10.250.3130">
    <property type="match status" value="1"/>
</dbReference>
<dbReference type="Gene3D" id="1.10.287.10">
    <property type="entry name" value="S15/NS1, RNA-binding"/>
    <property type="match status" value="1"/>
</dbReference>
<dbReference type="HAMAP" id="MF_01343_B">
    <property type="entry name" value="Ribosomal_uS15_B"/>
    <property type="match status" value="1"/>
</dbReference>
<dbReference type="InterPro" id="IPR000589">
    <property type="entry name" value="Ribosomal_uS15"/>
</dbReference>
<dbReference type="InterPro" id="IPR005290">
    <property type="entry name" value="Ribosomal_uS15_bac-type"/>
</dbReference>
<dbReference type="InterPro" id="IPR009068">
    <property type="entry name" value="uS15_NS1_RNA-bd_sf"/>
</dbReference>
<dbReference type="NCBIfam" id="TIGR00952">
    <property type="entry name" value="S15_bact"/>
    <property type="match status" value="1"/>
</dbReference>
<dbReference type="PANTHER" id="PTHR23321">
    <property type="entry name" value="RIBOSOMAL PROTEIN S15, BACTERIAL AND ORGANELLAR"/>
    <property type="match status" value="1"/>
</dbReference>
<dbReference type="PANTHER" id="PTHR23321:SF26">
    <property type="entry name" value="SMALL RIBOSOMAL SUBUNIT PROTEIN US15M"/>
    <property type="match status" value="1"/>
</dbReference>
<dbReference type="Pfam" id="PF00312">
    <property type="entry name" value="Ribosomal_S15"/>
    <property type="match status" value="1"/>
</dbReference>
<dbReference type="SMART" id="SM01387">
    <property type="entry name" value="Ribosomal_S15"/>
    <property type="match status" value="1"/>
</dbReference>
<dbReference type="SUPFAM" id="SSF47060">
    <property type="entry name" value="S15/NS1 RNA-binding domain"/>
    <property type="match status" value="1"/>
</dbReference>
<dbReference type="PROSITE" id="PS00362">
    <property type="entry name" value="RIBOSOMAL_S15"/>
    <property type="match status" value="1"/>
</dbReference>
<keyword id="KW-1185">Reference proteome</keyword>
<keyword id="KW-0687">Ribonucleoprotein</keyword>
<keyword id="KW-0689">Ribosomal protein</keyword>
<keyword id="KW-0694">RNA-binding</keyword>
<keyword id="KW-0699">rRNA-binding</keyword>